<evidence type="ECO:0000255" key="1">
    <source>
        <dbReference type="PROSITE-ProRule" id="PRU00108"/>
    </source>
</evidence>
<evidence type="ECO:0000255" key="2">
    <source>
        <dbReference type="PROSITE-ProRule" id="PRU00125"/>
    </source>
</evidence>
<evidence type="ECO:0000305" key="3"/>
<organism>
    <name type="scientific">Caenorhabditis briggsae</name>
    <dbReference type="NCBI Taxonomy" id="6238"/>
    <lineage>
        <taxon>Eukaryota</taxon>
        <taxon>Metazoa</taxon>
        <taxon>Ecdysozoa</taxon>
        <taxon>Nematoda</taxon>
        <taxon>Chromadorea</taxon>
        <taxon>Rhabditida</taxon>
        <taxon>Rhabditina</taxon>
        <taxon>Rhabditomorpha</taxon>
        <taxon>Rhabditoidea</taxon>
        <taxon>Rhabditidae</taxon>
        <taxon>Peloderinae</taxon>
        <taxon>Caenorhabditis</taxon>
    </lineage>
</organism>
<feature type="chain" id="PRO_0000075839" description="Mechanosensory protein 3">
    <location>
        <begin position="1"/>
        <end position="318"/>
    </location>
</feature>
<feature type="domain" description="LIM zinc-binding 1" evidence="2">
    <location>
        <begin position="27"/>
        <end position="86"/>
    </location>
</feature>
<feature type="domain" description="LIM zinc-binding 2" evidence="2">
    <location>
        <begin position="87"/>
        <end position="152"/>
    </location>
</feature>
<feature type="DNA-binding region" description="Homeobox" evidence="1">
    <location>
        <begin position="214"/>
        <end position="273"/>
    </location>
</feature>
<feature type="sequence conflict" description="In Ref. 2; L02878." evidence="3" ref="2">
    <original>F</original>
    <variation>Y</variation>
    <location>
        <position position="40"/>
    </location>
</feature>
<feature type="sequence conflict" description="In Ref. 2; L02878." evidence="3" ref="2">
    <original>DYSAH</original>
    <variation>TTVLN</variation>
    <location>
        <begin position="83"/>
        <end position="87"/>
    </location>
</feature>
<feature type="sequence conflict" description="In Ref. 2; L02878." evidence="3" ref="2">
    <original>P</original>
    <variation>A</variation>
    <location>
        <position position="98"/>
    </location>
</feature>
<feature type="sequence conflict" description="In Ref. 2; L02878." evidence="3" ref="2">
    <original>M</original>
    <variation>N</variation>
    <location>
        <position position="101"/>
    </location>
</feature>
<feature type="sequence conflict" description="In Ref. 2; L02878." evidence="3" ref="2">
    <original>DVPSCS</original>
    <variation>AFLVP</variation>
    <location>
        <begin position="161"/>
        <end position="166"/>
    </location>
</feature>
<feature type="sequence conflict" description="In Ref. 2; L02878." evidence="3" ref="2">
    <original>K</original>
    <variation>Q</variation>
    <location>
        <position position="186"/>
    </location>
</feature>
<feature type="sequence conflict" description="In Ref. 2; L02878." evidence="3" ref="2">
    <original>F</original>
    <variation>L</variation>
    <location>
        <position position="196"/>
    </location>
</feature>
<feature type="sequence conflict" description="In Ref. 2; L02878." evidence="3" ref="2">
    <original>P</original>
    <variation>L</variation>
    <location>
        <position position="217"/>
    </location>
</feature>
<feature type="sequence conflict" description="In Ref. 2; L02878." evidence="3" ref="2">
    <original>R</original>
    <variation>K</variation>
    <location>
        <position position="222"/>
    </location>
</feature>
<feature type="sequence conflict" description="In Ref. 2; L02878." evidence="3" ref="2">
    <original>N</original>
    <variation>Q</variation>
    <location>
        <position position="230"/>
    </location>
</feature>
<feature type="sequence conflict" description="In Ref. 2; L02878." evidence="3" ref="2">
    <original>A</original>
    <variation>R</variation>
    <location>
        <position position="243"/>
    </location>
</feature>
<name>MEC3_CAEBR</name>
<proteinExistence type="predicted"/>
<accession>P34764</accession>
<accession>A8X6F8</accession>
<accession>Q61MQ2</accession>
<reference key="1">
    <citation type="journal article" date="2003" name="PLoS Biol.">
        <title>The genome sequence of Caenorhabditis briggsae: a platform for comparative genomics.</title>
        <authorList>
            <person name="Stein L.D."/>
            <person name="Bao Z."/>
            <person name="Blasiar D."/>
            <person name="Blumenthal T."/>
            <person name="Brent M.R."/>
            <person name="Chen N."/>
            <person name="Chinwalla A."/>
            <person name="Clarke L."/>
            <person name="Clee C."/>
            <person name="Coghlan A."/>
            <person name="Coulson A."/>
            <person name="D'Eustachio P."/>
            <person name="Fitch D.H.A."/>
            <person name="Fulton L.A."/>
            <person name="Fulton R.E."/>
            <person name="Griffiths-Jones S."/>
            <person name="Harris T.W."/>
            <person name="Hillier L.W."/>
            <person name="Kamath R."/>
            <person name="Kuwabara P.E."/>
            <person name="Mardis E.R."/>
            <person name="Marra M.A."/>
            <person name="Miner T.L."/>
            <person name="Minx P."/>
            <person name="Mullikin J.C."/>
            <person name="Plumb R.W."/>
            <person name="Rogers J."/>
            <person name="Schein J.E."/>
            <person name="Sohrmann M."/>
            <person name="Spieth J."/>
            <person name="Stajich J.E."/>
            <person name="Wei C."/>
            <person name="Willey D."/>
            <person name="Wilson R.K."/>
            <person name="Durbin R.M."/>
            <person name="Waterston R.H."/>
        </authorList>
    </citation>
    <scope>NUCLEOTIDE SEQUENCE [LARGE SCALE GENOMIC DNA]</scope>
    <source>
        <strain>AF16</strain>
    </source>
</reference>
<reference key="2">
    <citation type="journal article" date="1992" name="EMBO J.">
        <title>Regulation of the mec-3 gene by the C.elegans homeoproteins UNC-86 and MEC-3.</title>
        <authorList>
            <person name="Xue D."/>
            <person name="Finney M."/>
            <person name="Ruvkun G."/>
            <person name="Chalfie M."/>
        </authorList>
    </citation>
    <scope>NUCLEOTIDE SEQUENCE [GENOMIC DNA] OF 1-296</scope>
</reference>
<comment type="function">
    <text>Specifies differentiation of the set of six touch receptor neurons. Binds cooperatively as a heterodimer with unc-86 to sites in the mec-3 gene promoter.</text>
</comment>
<comment type="subcellular location">
    <subcellularLocation>
        <location>Nucleus</location>
    </subcellularLocation>
</comment>
<keyword id="KW-0217">Developmental protein</keyword>
<keyword id="KW-0238">DNA-binding</keyword>
<keyword id="KW-0371">Homeobox</keyword>
<keyword id="KW-0440">LIM domain</keyword>
<keyword id="KW-0479">Metal-binding</keyword>
<keyword id="KW-0539">Nucleus</keyword>
<keyword id="KW-1185">Reference proteome</keyword>
<keyword id="KW-0677">Repeat</keyword>
<keyword id="KW-0862">Zinc</keyword>
<gene>
    <name type="primary">mec-3</name>
    <name type="ORF">CBG08386</name>
</gene>
<dbReference type="EMBL" id="HE601100">
    <property type="protein sequence ID" value="CAP28219.3"/>
    <property type="molecule type" value="Genomic_DNA"/>
</dbReference>
<dbReference type="EMBL" id="L02878">
    <property type="status" value="NOT_ANNOTATED_CDS"/>
    <property type="molecule type" value="Genomic_DNA"/>
</dbReference>
<dbReference type="PIR" id="S29399">
    <property type="entry name" value="S29399"/>
</dbReference>
<dbReference type="SMR" id="P34764"/>
<dbReference type="FunCoup" id="P34764">
    <property type="interactions" value="51"/>
</dbReference>
<dbReference type="STRING" id="6238.P34764"/>
<dbReference type="EnsemblMetazoa" id="CBG08386a.1">
    <property type="protein sequence ID" value="CBG08386a.1"/>
    <property type="gene ID" value="WBGene00030186"/>
</dbReference>
<dbReference type="KEGG" id="cbr:CBG_08386"/>
<dbReference type="CTD" id="8576570"/>
<dbReference type="WormBase" id="CBG08386a">
    <property type="protein sequence ID" value="CBP02049"/>
    <property type="gene ID" value="WBGene00030186"/>
    <property type="gene designation" value="Cbr-mec-3"/>
</dbReference>
<dbReference type="eggNOG" id="KOG0490">
    <property type="taxonomic scope" value="Eukaryota"/>
</dbReference>
<dbReference type="HOGENOM" id="CLU_027802_2_1_1"/>
<dbReference type="InParanoid" id="P34764"/>
<dbReference type="OMA" id="SYHENCV"/>
<dbReference type="Proteomes" id="UP000008549">
    <property type="component" value="Unassembled WGS sequence"/>
</dbReference>
<dbReference type="GO" id="GO:0005634">
    <property type="term" value="C:nucleus"/>
    <property type="evidence" value="ECO:0000318"/>
    <property type="project" value="GO_Central"/>
</dbReference>
<dbReference type="GO" id="GO:0000981">
    <property type="term" value="F:DNA-binding transcription factor activity, RNA polymerase II-specific"/>
    <property type="evidence" value="ECO:0000318"/>
    <property type="project" value="GO_Central"/>
</dbReference>
<dbReference type="GO" id="GO:0046872">
    <property type="term" value="F:metal ion binding"/>
    <property type="evidence" value="ECO:0007669"/>
    <property type="project" value="UniProtKB-KW"/>
</dbReference>
<dbReference type="GO" id="GO:0000977">
    <property type="term" value="F:RNA polymerase II transcription regulatory region sequence-specific DNA binding"/>
    <property type="evidence" value="ECO:0000318"/>
    <property type="project" value="GO_Central"/>
</dbReference>
<dbReference type="GO" id="GO:0030182">
    <property type="term" value="P:neuron differentiation"/>
    <property type="evidence" value="ECO:0000318"/>
    <property type="project" value="GO_Central"/>
</dbReference>
<dbReference type="GO" id="GO:0006357">
    <property type="term" value="P:regulation of transcription by RNA polymerase II"/>
    <property type="evidence" value="ECO:0000318"/>
    <property type="project" value="GO_Central"/>
</dbReference>
<dbReference type="CDD" id="cd00086">
    <property type="entry name" value="homeodomain"/>
    <property type="match status" value="1"/>
</dbReference>
<dbReference type="FunFam" id="1.10.10.60:FF:000620">
    <property type="entry name" value="Mechanosensory protein 3"/>
    <property type="match status" value="1"/>
</dbReference>
<dbReference type="FunFam" id="2.10.110.10:FF:000137">
    <property type="entry name" value="Mechanosensory protein 3"/>
    <property type="match status" value="1"/>
</dbReference>
<dbReference type="Gene3D" id="2.10.110.10">
    <property type="entry name" value="Cysteine Rich Protein"/>
    <property type="match status" value="2"/>
</dbReference>
<dbReference type="Gene3D" id="1.10.10.60">
    <property type="entry name" value="Homeodomain-like"/>
    <property type="match status" value="1"/>
</dbReference>
<dbReference type="InterPro" id="IPR001356">
    <property type="entry name" value="HD"/>
</dbReference>
<dbReference type="InterPro" id="IPR017970">
    <property type="entry name" value="Homeobox_CS"/>
</dbReference>
<dbReference type="InterPro" id="IPR009057">
    <property type="entry name" value="Homeodomain-like_sf"/>
</dbReference>
<dbReference type="InterPro" id="IPR050453">
    <property type="entry name" value="LIM_Homeobox_TF"/>
</dbReference>
<dbReference type="InterPro" id="IPR001781">
    <property type="entry name" value="Znf_LIM"/>
</dbReference>
<dbReference type="PANTHER" id="PTHR24208">
    <property type="entry name" value="LIM/HOMEOBOX PROTEIN LHX"/>
    <property type="match status" value="1"/>
</dbReference>
<dbReference type="PANTHER" id="PTHR24208:SF170">
    <property type="entry name" value="MECHANOSENSORY PROTEIN 3"/>
    <property type="match status" value="1"/>
</dbReference>
<dbReference type="Pfam" id="PF00046">
    <property type="entry name" value="Homeodomain"/>
    <property type="match status" value="1"/>
</dbReference>
<dbReference type="Pfam" id="PF00412">
    <property type="entry name" value="LIM"/>
    <property type="match status" value="2"/>
</dbReference>
<dbReference type="SMART" id="SM00389">
    <property type="entry name" value="HOX"/>
    <property type="match status" value="1"/>
</dbReference>
<dbReference type="SMART" id="SM00132">
    <property type="entry name" value="LIM"/>
    <property type="match status" value="2"/>
</dbReference>
<dbReference type="SUPFAM" id="SSF57716">
    <property type="entry name" value="Glucocorticoid receptor-like (DNA-binding domain)"/>
    <property type="match status" value="1"/>
</dbReference>
<dbReference type="SUPFAM" id="SSF46689">
    <property type="entry name" value="Homeodomain-like"/>
    <property type="match status" value="1"/>
</dbReference>
<dbReference type="PROSITE" id="PS00027">
    <property type="entry name" value="HOMEOBOX_1"/>
    <property type="match status" value="1"/>
</dbReference>
<dbReference type="PROSITE" id="PS50071">
    <property type="entry name" value="HOMEOBOX_2"/>
    <property type="match status" value="1"/>
</dbReference>
<dbReference type="PROSITE" id="PS00478">
    <property type="entry name" value="LIM_DOMAIN_1"/>
    <property type="match status" value="2"/>
</dbReference>
<dbReference type="PROSITE" id="PS50023">
    <property type="entry name" value="LIM_DOMAIN_2"/>
    <property type="match status" value="2"/>
</dbReference>
<protein>
    <recommendedName>
        <fullName>Mechanosensory protein 3</fullName>
    </recommendedName>
</protein>
<sequence>MEVLESKPLSAISMVIDAIGVEHDSQNKCYCCNEQIFDRFICRMDNRSYHENCVKCAICESPLAEKCFWKNGTIYCSQHYYKDYSAHRCAGCKKGVSPTDMVYKLKAGLVFHVECHCCTLCGRHLSPGEQILVDDTMMTVSCMSHYPLPMDDPCPPVGPSDVPSCSSDASAVAPYPMDESFPFQIKKEVDAYGYNFEHYSFSDFCDDDSRMLKRRGPRTTIRQNQLDVLNEMFSNTPKPSKHARAKLALETGLSMRVIQVWFQNRRSKERRLKHLCNYLRHYEQRGLIPPPIHFRNEEMDGTDFNSFCGNFEEEDDED</sequence>